<name>RRF_BACCZ</name>
<reference key="1">
    <citation type="journal article" date="2006" name="J. Bacteriol.">
        <title>Pathogenomic sequence analysis of Bacillus cereus and Bacillus thuringiensis isolates closely related to Bacillus anthracis.</title>
        <authorList>
            <person name="Han C.S."/>
            <person name="Xie G."/>
            <person name="Challacombe J.F."/>
            <person name="Altherr M.R."/>
            <person name="Bhotika S.S."/>
            <person name="Bruce D."/>
            <person name="Campbell C.S."/>
            <person name="Campbell M.L."/>
            <person name="Chen J."/>
            <person name="Chertkov O."/>
            <person name="Cleland C."/>
            <person name="Dimitrijevic M."/>
            <person name="Doggett N.A."/>
            <person name="Fawcett J.J."/>
            <person name="Glavina T."/>
            <person name="Goodwin L.A."/>
            <person name="Hill K.K."/>
            <person name="Hitchcock P."/>
            <person name="Jackson P.J."/>
            <person name="Keim P."/>
            <person name="Kewalramani A.R."/>
            <person name="Longmire J."/>
            <person name="Lucas S."/>
            <person name="Malfatti S."/>
            <person name="McMurry K."/>
            <person name="Meincke L.J."/>
            <person name="Misra M."/>
            <person name="Moseman B.L."/>
            <person name="Mundt M."/>
            <person name="Munk A.C."/>
            <person name="Okinaka R.T."/>
            <person name="Parson-Quintana B."/>
            <person name="Reilly L.P."/>
            <person name="Richardson P."/>
            <person name="Robinson D.L."/>
            <person name="Rubin E."/>
            <person name="Saunders E."/>
            <person name="Tapia R."/>
            <person name="Tesmer J.G."/>
            <person name="Thayer N."/>
            <person name="Thompson L.S."/>
            <person name="Tice H."/>
            <person name="Ticknor L.O."/>
            <person name="Wills P.L."/>
            <person name="Brettin T.S."/>
            <person name="Gilna P."/>
        </authorList>
    </citation>
    <scope>NUCLEOTIDE SEQUENCE [LARGE SCALE GENOMIC DNA]</scope>
    <source>
        <strain>ZK / E33L</strain>
    </source>
</reference>
<dbReference type="EMBL" id="CP000001">
    <property type="protein sequence ID" value="AAU16683.1"/>
    <property type="molecule type" value="Genomic_DNA"/>
</dbReference>
<dbReference type="RefSeq" id="WP_000531503.1">
    <property type="nucleotide sequence ID" value="NZ_CP009968.1"/>
</dbReference>
<dbReference type="SMR" id="Q636K2"/>
<dbReference type="KEGG" id="bcz:BCE33L3583"/>
<dbReference type="PATRIC" id="fig|288681.22.peg.1828"/>
<dbReference type="Proteomes" id="UP000002612">
    <property type="component" value="Chromosome"/>
</dbReference>
<dbReference type="GO" id="GO:0005737">
    <property type="term" value="C:cytoplasm"/>
    <property type="evidence" value="ECO:0007669"/>
    <property type="project" value="UniProtKB-SubCell"/>
</dbReference>
<dbReference type="GO" id="GO:0043023">
    <property type="term" value="F:ribosomal large subunit binding"/>
    <property type="evidence" value="ECO:0007669"/>
    <property type="project" value="TreeGrafter"/>
</dbReference>
<dbReference type="GO" id="GO:0006415">
    <property type="term" value="P:translational termination"/>
    <property type="evidence" value="ECO:0007669"/>
    <property type="project" value="UniProtKB-UniRule"/>
</dbReference>
<dbReference type="CDD" id="cd00520">
    <property type="entry name" value="RRF"/>
    <property type="match status" value="1"/>
</dbReference>
<dbReference type="FunFam" id="1.10.132.20:FF:000001">
    <property type="entry name" value="Ribosome-recycling factor"/>
    <property type="match status" value="1"/>
</dbReference>
<dbReference type="FunFam" id="3.30.1360.40:FF:000001">
    <property type="entry name" value="Ribosome-recycling factor"/>
    <property type="match status" value="1"/>
</dbReference>
<dbReference type="Gene3D" id="3.30.1360.40">
    <property type="match status" value="1"/>
</dbReference>
<dbReference type="Gene3D" id="1.10.132.20">
    <property type="entry name" value="Ribosome-recycling factor"/>
    <property type="match status" value="1"/>
</dbReference>
<dbReference type="HAMAP" id="MF_00040">
    <property type="entry name" value="RRF"/>
    <property type="match status" value="1"/>
</dbReference>
<dbReference type="InterPro" id="IPR002661">
    <property type="entry name" value="Ribosome_recyc_fac"/>
</dbReference>
<dbReference type="InterPro" id="IPR023584">
    <property type="entry name" value="Ribosome_recyc_fac_dom"/>
</dbReference>
<dbReference type="InterPro" id="IPR036191">
    <property type="entry name" value="RRF_sf"/>
</dbReference>
<dbReference type="NCBIfam" id="TIGR00496">
    <property type="entry name" value="frr"/>
    <property type="match status" value="1"/>
</dbReference>
<dbReference type="PANTHER" id="PTHR20982:SF3">
    <property type="entry name" value="MITOCHONDRIAL RIBOSOME RECYCLING FACTOR PSEUDO 1"/>
    <property type="match status" value="1"/>
</dbReference>
<dbReference type="PANTHER" id="PTHR20982">
    <property type="entry name" value="RIBOSOME RECYCLING FACTOR"/>
    <property type="match status" value="1"/>
</dbReference>
<dbReference type="Pfam" id="PF01765">
    <property type="entry name" value="RRF"/>
    <property type="match status" value="1"/>
</dbReference>
<dbReference type="SUPFAM" id="SSF55194">
    <property type="entry name" value="Ribosome recycling factor, RRF"/>
    <property type="match status" value="1"/>
</dbReference>
<gene>
    <name evidence="1" type="primary">frr</name>
    <name type="ordered locus">BCE33L3583</name>
</gene>
<proteinExistence type="inferred from homology"/>
<protein>
    <recommendedName>
        <fullName evidence="1">Ribosome-recycling factor</fullName>
        <shortName evidence="1">RRF</shortName>
    </recommendedName>
    <alternativeName>
        <fullName evidence="1">Ribosome-releasing factor</fullName>
    </alternativeName>
</protein>
<organism>
    <name type="scientific">Bacillus cereus (strain ZK / E33L)</name>
    <dbReference type="NCBI Taxonomy" id="288681"/>
    <lineage>
        <taxon>Bacteria</taxon>
        <taxon>Bacillati</taxon>
        <taxon>Bacillota</taxon>
        <taxon>Bacilli</taxon>
        <taxon>Bacillales</taxon>
        <taxon>Bacillaceae</taxon>
        <taxon>Bacillus</taxon>
        <taxon>Bacillus cereus group</taxon>
    </lineage>
</organism>
<keyword id="KW-0963">Cytoplasm</keyword>
<keyword id="KW-0648">Protein biosynthesis</keyword>
<sequence>MGQQVLKSSNEKMEKAVAAYSRELATVRAGRASASVLDKVQVDYYGAPTPVVQLANITVPEARLLVIQPYDKTSIGDIEKAILKADLGLNPSNDGTVIRIAFPALTEERRRDLVKVVKKYAEEAKVAVRNVRRDGNDDLKKLEKAGEITEDDLRGYTEDIQKETDKYIAKVDEIAKNKEKEIMEV</sequence>
<feature type="chain" id="PRO_0000167405" description="Ribosome-recycling factor">
    <location>
        <begin position="1"/>
        <end position="185"/>
    </location>
</feature>
<evidence type="ECO:0000255" key="1">
    <source>
        <dbReference type="HAMAP-Rule" id="MF_00040"/>
    </source>
</evidence>
<accession>Q636K2</accession>
<comment type="function">
    <text evidence="1">Responsible for the release of ribosomes from messenger RNA at the termination of protein biosynthesis. May increase the efficiency of translation by recycling ribosomes from one round of translation to another.</text>
</comment>
<comment type="subcellular location">
    <subcellularLocation>
        <location evidence="1">Cytoplasm</location>
    </subcellularLocation>
</comment>
<comment type="similarity">
    <text evidence="1">Belongs to the RRF family.</text>
</comment>